<sequence length="209" mass="22074">MFVRPESGEQGPETLAPASGAEIQRFPVPAVEPVPAPGADSPPGTALELEEAPEPSCRCPGTAQDQPSEELPDFMAPPVEPPASALELKVWLELEVAERGGQHSSSQQLPHCSQSWAQWKLWRQRPGFAIWAPLPHWRGTSLIQQSSSPAAEGPAATAAGAVCLPAGGAGEQEKEPVSRGSSRSSCSQRRPPPPGMEVCPQLGIWAICP</sequence>
<organism>
    <name type="scientific">Homo sapiens</name>
    <name type="common">Human</name>
    <dbReference type="NCBI Taxonomy" id="9606"/>
    <lineage>
        <taxon>Eukaryota</taxon>
        <taxon>Metazoa</taxon>
        <taxon>Chordata</taxon>
        <taxon>Craniata</taxon>
        <taxon>Vertebrata</taxon>
        <taxon>Euteleostomi</taxon>
        <taxon>Mammalia</taxon>
        <taxon>Eutheria</taxon>
        <taxon>Euarchontoglires</taxon>
        <taxon>Primates</taxon>
        <taxon>Haplorrhini</taxon>
        <taxon>Catarrhini</taxon>
        <taxon>Hominidae</taxon>
        <taxon>Homo</taxon>
    </lineage>
</organism>
<name>CB27B_HUMAN</name>
<dbReference type="EMBL" id="AC103564">
    <property type="protein sequence ID" value="AAY24065.1"/>
    <property type="molecule type" value="Genomic_DNA"/>
</dbReference>
<dbReference type="EMBL" id="BC043584">
    <property type="protein sequence ID" value="AAH43584.1"/>
    <property type="molecule type" value="mRNA"/>
</dbReference>
<dbReference type="RefSeq" id="NP_999626.1">
    <property type="nucleotide sequence ID" value="NM_214461.2"/>
</dbReference>
<dbReference type="BioGRID" id="118922">
    <property type="interactions" value="9"/>
</dbReference>
<dbReference type="BioGRID" id="135911">
    <property type="interactions" value="34"/>
</dbReference>
<dbReference type="FunCoup" id="P0DPF6">
    <property type="interactions" value="1"/>
</dbReference>
<dbReference type="IntAct" id="P0DPF6">
    <property type="interactions" value="25"/>
</dbReference>
<dbReference type="PaxDb" id="9606-ENSP00000347298"/>
<dbReference type="AGR" id="HGNC:33824"/>
<dbReference type="GeneCards" id="CDRT15P3"/>
<dbReference type="HGNC" id="HGNC:33824">
    <property type="gene designation" value="CDRT15P3"/>
</dbReference>
<dbReference type="neXtProt" id="NX_P0DPF6"/>
<dbReference type="eggNOG" id="ENOG502TFSV">
    <property type="taxonomic scope" value="Eukaryota"/>
</dbReference>
<dbReference type="InParanoid" id="P0DPF6"/>
<dbReference type="PAN-GO" id="P0DPF6">
    <property type="GO annotations" value="0 GO annotations based on evolutionary models"/>
</dbReference>
<dbReference type="PathwayCommons" id="P0DPF6"/>
<dbReference type="SignaLink" id="P0DPF6"/>
<dbReference type="Pharos" id="P0DPF6">
    <property type="development level" value="Tdark"/>
</dbReference>
<dbReference type="Proteomes" id="UP000005640">
    <property type="component" value="Unplaced"/>
</dbReference>
<dbReference type="PANTHER" id="PTHR16471:SF2">
    <property type="match status" value="1"/>
</dbReference>
<dbReference type="PANTHER" id="PTHR16471">
    <property type="entry name" value="CMT1A DUPLICATED REGION TRANSCRIPT 15 PROTEIN-LIKE PROTEIN"/>
    <property type="match status" value="1"/>
</dbReference>
<reference key="1">
    <citation type="journal article" date="2005" name="Nature">
        <title>Generation and annotation of the DNA sequences of human chromosomes 2 and 4.</title>
        <authorList>
            <person name="Hillier L.W."/>
            <person name="Graves T.A."/>
            <person name="Fulton R.S."/>
            <person name="Fulton L.A."/>
            <person name="Pepin K.H."/>
            <person name="Minx P."/>
            <person name="Wagner-McPherson C."/>
            <person name="Layman D."/>
            <person name="Wylie K."/>
            <person name="Sekhon M."/>
            <person name="Becker M.C."/>
            <person name="Fewell G.A."/>
            <person name="Delehaunty K.D."/>
            <person name="Miner T.L."/>
            <person name="Nash W.E."/>
            <person name="Kremitzki C."/>
            <person name="Oddy L."/>
            <person name="Du H."/>
            <person name="Sun H."/>
            <person name="Bradshaw-Cordum H."/>
            <person name="Ali J."/>
            <person name="Carter J."/>
            <person name="Cordes M."/>
            <person name="Harris A."/>
            <person name="Isak A."/>
            <person name="van Brunt A."/>
            <person name="Nguyen C."/>
            <person name="Du F."/>
            <person name="Courtney L."/>
            <person name="Kalicki J."/>
            <person name="Ozersky P."/>
            <person name="Abbott S."/>
            <person name="Armstrong J."/>
            <person name="Belter E.A."/>
            <person name="Caruso L."/>
            <person name="Cedroni M."/>
            <person name="Cotton M."/>
            <person name="Davidson T."/>
            <person name="Desai A."/>
            <person name="Elliott G."/>
            <person name="Erb T."/>
            <person name="Fronick C."/>
            <person name="Gaige T."/>
            <person name="Haakenson W."/>
            <person name="Haglund K."/>
            <person name="Holmes A."/>
            <person name="Harkins R."/>
            <person name="Kim K."/>
            <person name="Kruchowski S.S."/>
            <person name="Strong C.M."/>
            <person name="Grewal N."/>
            <person name="Goyea E."/>
            <person name="Hou S."/>
            <person name="Levy A."/>
            <person name="Martinka S."/>
            <person name="Mead K."/>
            <person name="McLellan M.D."/>
            <person name="Meyer R."/>
            <person name="Randall-Maher J."/>
            <person name="Tomlinson C."/>
            <person name="Dauphin-Kohlberg S."/>
            <person name="Kozlowicz-Reilly A."/>
            <person name="Shah N."/>
            <person name="Swearengen-Shahid S."/>
            <person name="Snider J."/>
            <person name="Strong J.T."/>
            <person name="Thompson J."/>
            <person name="Yoakum M."/>
            <person name="Leonard S."/>
            <person name="Pearman C."/>
            <person name="Trani L."/>
            <person name="Radionenko M."/>
            <person name="Waligorski J.E."/>
            <person name="Wang C."/>
            <person name="Rock S.M."/>
            <person name="Tin-Wollam A.-M."/>
            <person name="Maupin R."/>
            <person name="Latreille P."/>
            <person name="Wendl M.C."/>
            <person name="Yang S.-P."/>
            <person name="Pohl C."/>
            <person name="Wallis J.W."/>
            <person name="Spieth J."/>
            <person name="Bieri T.A."/>
            <person name="Berkowicz N."/>
            <person name="Nelson J.O."/>
            <person name="Osborne J."/>
            <person name="Ding L."/>
            <person name="Meyer R."/>
            <person name="Sabo A."/>
            <person name="Shotland Y."/>
            <person name="Sinha P."/>
            <person name="Wohldmann P.E."/>
            <person name="Cook L.L."/>
            <person name="Hickenbotham M.T."/>
            <person name="Eldred J."/>
            <person name="Williams D."/>
            <person name="Jones T.A."/>
            <person name="She X."/>
            <person name="Ciccarelli F.D."/>
            <person name="Izaurralde E."/>
            <person name="Taylor J."/>
            <person name="Schmutz J."/>
            <person name="Myers R.M."/>
            <person name="Cox D.R."/>
            <person name="Huang X."/>
            <person name="McPherson J.D."/>
            <person name="Mardis E.R."/>
            <person name="Clifton S.W."/>
            <person name="Warren W.C."/>
            <person name="Chinwalla A.T."/>
            <person name="Eddy S.R."/>
            <person name="Marra M.A."/>
            <person name="Ovcharenko I."/>
            <person name="Furey T.S."/>
            <person name="Miller W."/>
            <person name="Eichler E.E."/>
            <person name="Bork P."/>
            <person name="Suyama M."/>
            <person name="Torrents D."/>
            <person name="Waterston R.H."/>
            <person name="Wilson R.K."/>
        </authorList>
    </citation>
    <scope>NUCLEOTIDE SEQUENCE [LARGE SCALE GENOMIC DNA]</scope>
</reference>
<reference key="2">
    <citation type="journal article" date="2004" name="Genome Res.">
        <title>The status, quality, and expansion of the NIH full-length cDNA project: the Mammalian Gene Collection (MGC).</title>
        <authorList>
            <consortium name="The MGC Project Team"/>
        </authorList>
    </citation>
    <scope>NUCLEOTIDE SEQUENCE [LARGE SCALE MRNA]</scope>
    <source>
        <tissue>Brain</tissue>
        <tissue>Pancreas</tissue>
    </source>
</reference>
<protein>
    <recommendedName>
        <fullName>Putative uncharacterized protein CDRT15P3</fullName>
    </recommendedName>
</protein>
<proteinExistence type="uncertain"/>
<feature type="chain" id="PRO_0000089356" description="Putative uncharacterized protein CDRT15P3">
    <location>
        <begin position="1"/>
        <end position="209"/>
    </location>
</feature>
<feature type="region of interest" description="Disordered" evidence="1">
    <location>
        <begin position="1"/>
        <end position="80"/>
    </location>
</feature>
<feature type="region of interest" description="Disordered" evidence="1">
    <location>
        <begin position="164"/>
        <end position="197"/>
    </location>
</feature>
<feature type="compositionally biased region" description="Low complexity" evidence="1">
    <location>
        <begin position="178"/>
        <end position="189"/>
    </location>
</feature>
<comment type="interaction">
    <interactant intactId="EBI-13317659">
        <id>P0DPF6</id>
    </interactant>
    <interactant intactId="EBI-355098">
        <id>O00221</id>
        <label>NFKBIE</label>
    </interactant>
    <organismsDiffer>false</organismsDiffer>
    <experiments>3</experiments>
</comment>
<comment type="interaction">
    <interactant intactId="EBI-13317659">
        <id>P0DPF6</id>
    </interactant>
    <interactant intactId="EBI-50433196">
        <id>A0A6Q8PF08</id>
        <label>PMP22</label>
    </interactant>
    <organismsDiffer>false</organismsDiffer>
    <experiments>3</experiments>
</comment>
<comment type="caution">
    <text evidence="2">Could be the product of a pseudogene.</text>
</comment>
<gene>
    <name evidence="3" type="primary">CDRT15P3</name>
    <name type="synonym">C2orf27B</name>
</gene>
<keyword id="KW-1185">Reference proteome</keyword>
<accession>P0DPF6</accession>
<accession>O43575</accession>
<accession>Q2M1X0</accession>
<accession>Q52M10</accession>
<accession>Q580R0</accession>
<accession>Q86XG2</accession>
<evidence type="ECO:0000256" key="1">
    <source>
        <dbReference type="SAM" id="MobiDB-lite"/>
    </source>
</evidence>
<evidence type="ECO:0000305" key="2"/>
<evidence type="ECO:0000312" key="3">
    <source>
        <dbReference type="HGNC" id="HGNC:33824"/>
    </source>
</evidence>